<comment type="function">
    <text evidence="1">Can catalyze the hydrolysis of ATP in the presence of single-stranded DNA, the ATP-dependent uptake of single-stranded DNA by duplex DNA, and the ATP-dependent hybridization of homologous single-stranded DNAs. It interacts with LexA causing its activation and leading to its autocatalytic cleavage.</text>
</comment>
<comment type="subcellular location">
    <subcellularLocation>
        <location evidence="1">Cytoplasm</location>
    </subcellularLocation>
</comment>
<comment type="similarity">
    <text evidence="1">Belongs to the RecA family.</text>
</comment>
<gene>
    <name evidence="1" type="primary">recA</name>
    <name type="ordered locus">Strop_1425</name>
</gene>
<accession>A4X4U1</accession>
<proteinExistence type="inferred from homology"/>
<protein>
    <recommendedName>
        <fullName evidence="1">Protein RecA</fullName>
    </recommendedName>
    <alternativeName>
        <fullName evidence="1">Recombinase A</fullName>
    </alternativeName>
</protein>
<reference key="1">
    <citation type="journal article" date="2007" name="Proc. Natl. Acad. Sci. U.S.A.">
        <title>Genome sequencing reveals complex secondary metabolome in the marine actinomycete Salinispora tropica.</title>
        <authorList>
            <person name="Udwary D.W."/>
            <person name="Zeigler L."/>
            <person name="Asolkar R.N."/>
            <person name="Singan V."/>
            <person name="Lapidus A."/>
            <person name="Fenical W."/>
            <person name="Jensen P.R."/>
            <person name="Moore B.S."/>
        </authorList>
    </citation>
    <scope>NUCLEOTIDE SEQUENCE [LARGE SCALE GENOMIC DNA]</scope>
    <source>
        <strain>ATCC BAA-916 / DSM 44818 / JCM 13857 / NBRC 105044 / CNB-440</strain>
    </source>
</reference>
<feature type="chain" id="PRO_1000078679" description="Protein RecA">
    <location>
        <begin position="1"/>
        <end position="348"/>
    </location>
</feature>
<feature type="binding site" evidence="1">
    <location>
        <begin position="67"/>
        <end position="74"/>
    </location>
    <ligand>
        <name>ATP</name>
        <dbReference type="ChEBI" id="CHEBI:30616"/>
    </ligand>
</feature>
<dbReference type="EMBL" id="CP000667">
    <property type="protein sequence ID" value="ABP53891.1"/>
    <property type="molecule type" value="Genomic_DNA"/>
</dbReference>
<dbReference type="RefSeq" id="WP_011905323.1">
    <property type="nucleotide sequence ID" value="NC_009380.1"/>
</dbReference>
<dbReference type="SMR" id="A4X4U1"/>
<dbReference type="STRING" id="369723.Strop_1425"/>
<dbReference type="KEGG" id="stp:Strop_1425"/>
<dbReference type="PATRIC" id="fig|369723.5.peg.1452"/>
<dbReference type="eggNOG" id="COG0468">
    <property type="taxonomic scope" value="Bacteria"/>
</dbReference>
<dbReference type="HOGENOM" id="CLU_040469_3_2_11"/>
<dbReference type="Proteomes" id="UP000000235">
    <property type="component" value="Chromosome"/>
</dbReference>
<dbReference type="GO" id="GO:0005829">
    <property type="term" value="C:cytosol"/>
    <property type="evidence" value="ECO:0007669"/>
    <property type="project" value="TreeGrafter"/>
</dbReference>
<dbReference type="GO" id="GO:0005524">
    <property type="term" value="F:ATP binding"/>
    <property type="evidence" value="ECO:0007669"/>
    <property type="project" value="UniProtKB-UniRule"/>
</dbReference>
<dbReference type="GO" id="GO:0016887">
    <property type="term" value="F:ATP hydrolysis activity"/>
    <property type="evidence" value="ECO:0007669"/>
    <property type="project" value="InterPro"/>
</dbReference>
<dbReference type="GO" id="GO:0140664">
    <property type="term" value="F:ATP-dependent DNA damage sensor activity"/>
    <property type="evidence" value="ECO:0007669"/>
    <property type="project" value="InterPro"/>
</dbReference>
<dbReference type="GO" id="GO:0003684">
    <property type="term" value="F:damaged DNA binding"/>
    <property type="evidence" value="ECO:0007669"/>
    <property type="project" value="UniProtKB-UniRule"/>
</dbReference>
<dbReference type="GO" id="GO:0003697">
    <property type="term" value="F:single-stranded DNA binding"/>
    <property type="evidence" value="ECO:0007669"/>
    <property type="project" value="UniProtKB-UniRule"/>
</dbReference>
<dbReference type="GO" id="GO:0006310">
    <property type="term" value="P:DNA recombination"/>
    <property type="evidence" value="ECO:0007669"/>
    <property type="project" value="UniProtKB-UniRule"/>
</dbReference>
<dbReference type="GO" id="GO:0006281">
    <property type="term" value="P:DNA repair"/>
    <property type="evidence" value="ECO:0007669"/>
    <property type="project" value="UniProtKB-UniRule"/>
</dbReference>
<dbReference type="GO" id="GO:0009432">
    <property type="term" value="P:SOS response"/>
    <property type="evidence" value="ECO:0007669"/>
    <property type="project" value="UniProtKB-UniRule"/>
</dbReference>
<dbReference type="CDD" id="cd00983">
    <property type="entry name" value="RecA"/>
    <property type="match status" value="1"/>
</dbReference>
<dbReference type="FunFam" id="3.40.50.300:FF:000087">
    <property type="entry name" value="Recombinase RecA"/>
    <property type="match status" value="1"/>
</dbReference>
<dbReference type="Gene3D" id="3.40.50.300">
    <property type="entry name" value="P-loop containing nucleotide triphosphate hydrolases"/>
    <property type="match status" value="1"/>
</dbReference>
<dbReference type="HAMAP" id="MF_00268">
    <property type="entry name" value="RecA"/>
    <property type="match status" value="1"/>
</dbReference>
<dbReference type="InterPro" id="IPR003593">
    <property type="entry name" value="AAA+_ATPase"/>
</dbReference>
<dbReference type="InterPro" id="IPR013765">
    <property type="entry name" value="DNA_recomb/repair_RecA"/>
</dbReference>
<dbReference type="InterPro" id="IPR020584">
    <property type="entry name" value="DNA_recomb/repair_RecA_CS"/>
</dbReference>
<dbReference type="InterPro" id="IPR027417">
    <property type="entry name" value="P-loop_NTPase"/>
</dbReference>
<dbReference type="InterPro" id="IPR049261">
    <property type="entry name" value="RecA-like_C"/>
</dbReference>
<dbReference type="InterPro" id="IPR049428">
    <property type="entry name" value="RecA-like_N"/>
</dbReference>
<dbReference type="InterPro" id="IPR020588">
    <property type="entry name" value="RecA_ATP-bd"/>
</dbReference>
<dbReference type="InterPro" id="IPR023400">
    <property type="entry name" value="RecA_C_sf"/>
</dbReference>
<dbReference type="InterPro" id="IPR020587">
    <property type="entry name" value="RecA_monomer-monomer_interface"/>
</dbReference>
<dbReference type="NCBIfam" id="TIGR02012">
    <property type="entry name" value="tigrfam_recA"/>
    <property type="match status" value="1"/>
</dbReference>
<dbReference type="PANTHER" id="PTHR45900:SF1">
    <property type="entry name" value="MITOCHONDRIAL DNA REPAIR PROTEIN RECA HOMOLOG-RELATED"/>
    <property type="match status" value="1"/>
</dbReference>
<dbReference type="PANTHER" id="PTHR45900">
    <property type="entry name" value="RECA"/>
    <property type="match status" value="1"/>
</dbReference>
<dbReference type="Pfam" id="PF00154">
    <property type="entry name" value="RecA"/>
    <property type="match status" value="1"/>
</dbReference>
<dbReference type="Pfam" id="PF21096">
    <property type="entry name" value="RecA_C"/>
    <property type="match status" value="1"/>
</dbReference>
<dbReference type="PRINTS" id="PR00142">
    <property type="entry name" value="RECA"/>
</dbReference>
<dbReference type="SMART" id="SM00382">
    <property type="entry name" value="AAA"/>
    <property type="match status" value="1"/>
</dbReference>
<dbReference type="SUPFAM" id="SSF52540">
    <property type="entry name" value="P-loop containing nucleoside triphosphate hydrolases"/>
    <property type="match status" value="1"/>
</dbReference>
<dbReference type="SUPFAM" id="SSF54752">
    <property type="entry name" value="RecA protein, C-terminal domain"/>
    <property type="match status" value="1"/>
</dbReference>
<dbReference type="PROSITE" id="PS00321">
    <property type="entry name" value="RECA_1"/>
    <property type="match status" value="1"/>
</dbReference>
<dbReference type="PROSITE" id="PS50162">
    <property type="entry name" value="RECA_2"/>
    <property type="match status" value="1"/>
</dbReference>
<dbReference type="PROSITE" id="PS50163">
    <property type="entry name" value="RECA_3"/>
    <property type="match status" value="1"/>
</dbReference>
<sequence length="348" mass="36841">MAAVPDRERALDLALAQIDKQFGKGSVMRLGERPVVETAVVPTGSIALDVALGVGGLPRGRVIEVYGPESSGKTTVALHAVANAQRSGGIAAFVDAEHALDPEYARALGVDTDALLVSQPDTGEQALEIADMLVRSGALDIIVIDSVAALVPRAEIEGEMGDSHVGLQARLMSQALRKMTGVLSHTGTTAVFINQLREKIGVMFGSPETTTGGRALKFYASVRLDVRRIESLKDGTDVVGNRTRVKVVKNKVAAPFKQAEFDIMYGKGISREGSLIDVGVEQAIIRKSGAWYTYEGDQLGQGKEKAREFLRENPDVAAEIEKKILEKLGVGAGAGDAAGGPELPPVDF</sequence>
<name>RECA_SALTO</name>
<organism>
    <name type="scientific">Salinispora tropica (strain ATCC BAA-916 / DSM 44818 / JCM 13857 / NBRC 105044 / CNB-440)</name>
    <dbReference type="NCBI Taxonomy" id="369723"/>
    <lineage>
        <taxon>Bacteria</taxon>
        <taxon>Bacillati</taxon>
        <taxon>Actinomycetota</taxon>
        <taxon>Actinomycetes</taxon>
        <taxon>Micromonosporales</taxon>
        <taxon>Micromonosporaceae</taxon>
        <taxon>Salinispora</taxon>
    </lineage>
</organism>
<keyword id="KW-0067">ATP-binding</keyword>
<keyword id="KW-0963">Cytoplasm</keyword>
<keyword id="KW-0227">DNA damage</keyword>
<keyword id="KW-0233">DNA recombination</keyword>
<keyword id="KW-0234">DNA repair</keyword>
<keyword id="KW-0238">DNA-binding</keyword>
<keyword id="KW-0547">Nucleotide-binding</keyword>
<keyword id="KW-1185">Reference proteome</keyword>
<keyword id="KW-0742">SOS response</keyword>
<evidence type="ECO:0000255" key="1">
    <source>
        <dbReference type="HAMAP-Rule" id="MF_00268"/>
    </source>
</evidence>